<feature type="transit peptide" description="Chloroplast" evidence="2">
    <location>
        <begin position="1"/>
        <end position="54"/>
    </location>
</feature>
<feature type="chain" id="PRO_0000418157" description="Acyl carrier protein 5, chloroplastic">
    <location>
        <begin position="55"/>
        <end position="139"/>
    </location>
</feature>
<feature type="domain" description="Carrier" evidence="3">
    <location>
        <begin position="59"/>
        <end position="134"/>
    </location>
</feature>
<feature type="modified residue" description="O-(pantetheine 4'-phosphoryl)serine" evidence="3">
    <location>
        <position position="94"/>
    </location>
</feature>
<name>ACP5_ARATH</name>
<organism>
    <name type="scientific">Arabidopsis thaliana</name>
    <name type="common">Mouse-ear cress</name>
    <dbReference type="NCBI Taxonomy" id="3702"/>
    <lineage>
        <taxon>Eukaryota</taxon>
        <taxon>Viridiplantae</taxon>
        <taxon>Streptophyta</taxon>
        <taxon>Embryophyta</taxon>
        <taxon>Tracheophyta</taxon>
        <taxon>Spermatophyta</taxon>
        <taxon>Magnoliopsida</taxon>
        <taxon>eudicotyledons</taxon>
        <taxon>Gunneridae</taxon>
        <taxon>Pentapetalae</taxon>
        <taxon>rosids</taxon>
        <taxon>malvids</taxon>
        <taxon>Brassicales</taxon>
        <taxon>Brassicaceae</taxon>
        <taxon>Camelineae</taxon>
        <taxon>Arabidopsis</taxon>
    </lineage>
</organism>
<sequence length="139" mass="15302">MATSFCSSISMQAPFSATTTRFCLNKQATIFNNEKTNNLSFSLRRLMPARLAVSCAVKQETVEKVSEIVKKQLSLTDDQKVTAGTKFTELGADSLDTVEIVMGLEEEFGITMAEERAKEIATVQQAAELIEELVQEKTA</sequence>
<keyword id="KW-0150">Chloroplast</keyword>
<keyword id="KW-0275">Fatty acid biosynthesis</keyword>
<keyword id="KW-0276">Fatty acid metabolism</keyword>
<keyword id="KW-0444">Lipid biosynthesis</keyword>
<keyword id="KW-0443">Lipid metabolism</keyword>
<keyword id="KW-0596">Phosphopantetheine</keyword>
<keyword id="KW-0597">Phosphoprotein</keyword>
<keyword id="KW-0934">Plastid</keyword>
<keyword id="KW-1185">Reference proteome</keyword>
<keyword id="KW-0809">Transit peptide</keyword>
<proteinExistence type="inferred from homology"/>
<protein>
    <recommendedName>
        <fullName>Acyl carrier protein 5, chloroplastic</fullName>
    </recommendedName>
</protein>
<reference key="1">
    <citation type="journal article" date="2000" name="Nature">
        <title>Sequence and analysis of chromosome 5 of the plant Arabidopsis thaliana.</title>
        <authorList>
            <person name="Tabata S."/>
            <person name="Kaneko T."/>
            <person name="Nakamura Y."/>
            <person name="Kotani H."/>
            <person name="Kato T."/>
            <person name="Asamizu E."/>
            <person name="Miyajima N."/>
            <person name="Sasamoto S."/>
            <person name="Kimura T."/>
            <person name="Hosouchi T."/>
            <person name="Kawashima K."/>
            <person name="Kohara M."/>
            <person name="Matsumoto M."/>
            <person name="Matsuno A."/>
            <person name="Muraki A."/>
            <person name="Nakayama S."/>
            <person name="Nakazaki N."/>
            <person name="Naruo K."/>
            <person name="Okumura S."/>
            <person name="Shinpo S."/>
            <person name="Takeuchi C."/>
            <person name="Wada T."/>
            <person name="Watanabe A."/>
            <person name="Yamada M."/>
            <person name="Yasuda M."/>
            <person name="Sato S."/>
            <person name="de la Bastide M."/>
            <person name="Huang E."/>
            <person name="Spiegel L."/>
            <person name="Gnoj L."/>
            <person name="O'Shaughnessy A."/>
            <person name="Preston R."/>
            <person name="Habermann K."/>
            <person name="Murray J."/>
            <person name="Johnson D."/>
            <person name="Rohlfing T."/>
            <person name="Nelson J."/>
            <person name="Stoneking T."/>
            <person name="Pepin K."/>
            <person name="Spieth J."/>
            <person name="Sekhon M."/>
            <person name="Armstrong J."/>
            <person name="Becker M."/>
            <person name="Belter E."/>
            <person name="Cordum H."/>
            <person name="Cordes M."/>
            <person name="Courtney L."/>
            <person name="Courtney W."/>
            <person name="Dante M."/>
            <person name="Du H."/>
            <person name="Edwards J."/>
            <person name="Fryman J."/>
            <person name="Haakensen B."/>
            <person name="Lamar E."/>
            <person name="Latreille P."/>
            <person name="Leonard S."/>
            <person name="Meyer R."/>
            <person name="Mulvaney E."/>
            <person name="Ozersky P."/>
            <person name="Riley A."/>
            <person name="Strowmatt C."/>
            <person name="Wagner-McPherson C."/>
            <person name="Wollam A."/>
            <person name="Yoakum M."/>
            <person name="Bell M."/>
            <person name="Dedhia N."/>
            <person name="Parnell L."/>
            <person name="Shah R."/>
            <person name="Rodriguez M."/>
            <person name="Hoon See L."/>
            <person name="Vil D."/>
            <person name="Baker J."/>
            <person name="Kirchoff K."/>
            <person name="Toth K."/>
            <person name="King L."/>
            <person name="Bahret A."/>
            <person name="Miller B."/>
            <person name="Marra M.A."/>
            <person name="Martienssen R."/>
            <person name="McCombie W.R."/>
            <person name="Wilson R.K."/>
            <person name="Murphy G."/>
            <person name="Bancroft I."/>
            <person name="Volckaert G."/>
            <person name="Wambutt R."/>
            <person name="Duesterhoeft A."/>
            <person name="Stiekema W."/>
            <person name="Pohl T."/>
            <person name="Entian K.-D."/>
            <person name="Terryn N."/>
            <person name="Hartley N."/>
            <person name="Bent E."/>
            <person name="Johnson S."/>
            <person name="Langham S.-A."/>
            <person name="McCullagh B."/>
            <person name="Robben J."/>
            <person name="Grymonprez B."/>
            <person name="Zimmermann W."/>
            <person name="Ramsperger U."/>
            <person name="Wedler H."/>
            <person name="Balke K."/>
            <person name="Wedler E."/>
            <person name="Peters S."/>
            <person name="van Staveren M."/>
            <person name="Dirkse W."/>
            <person name="Mooijman P."/>
            <person name="Klein Lankhorst R."/>
            <person name="Weitzenegger T."/>
            <person name="Bothe G."/>
            <person name="Rose M."/>
            <person name="Hauf J."/>
            <person name="Berneiser S."/>
            <person name="Hempel S."/>
            <person name="Feldpausch M."/>
            <person name="Lamberth S."/>
            <person name="Villarroel R."/>
            <person name="Gielen J."/>
            <person name="Ardiles W."/>
            <person name="Bents O."/>
            <person name="Lemcke K."/>
            <person name="Kolesov G."/>
            <person name="Mayer K.F.X."/>
            <person name="Rudd S."/>
            <person name="Schoof H."/>
            <person name="Schueller C."/>
            <person name="Zaccaria P."/>
            <person name="Mewes H.-W."/>
            <person name="Bevan M."/>
            <person name="Fransz P.F."/>
        </authorList>
    </citation>
    <scope>NUCLEOTIDE SEQUENCE [LARGE SCALE GENOMIC DNA]</scope>
    <source>
        <strain>cv. Columbia</strain>
    </source>
</reference>
<reference key="2">
    <citation type="journal article" date="2017" name="Plant J.">
        <title>Araport11: a complete reannotation of the Arabidopsis thaliana reference genome.</title>
        <authorList>
            <person name="Cheng C.Y."/>
            <person name="Krishnakumar V."/>
            <person name="Chan A.P."/>
            <person name="Thibaud-Nissen F."/>
            <person name="Schobel S."/>
            <person name="Town C.D."/>
        </authorList>
    </citation>
    <scope>GENOME REANNOTATION</scope>
    <source>
        <strain>cv. Columbia</strain>
    </source>
</reference>
<reference key="3">
    <citation type="journal article" date="2009" name="Cell Host Microbe">
        <title>An intact cuticle in distal tissues is essential for the induction of systemic acquired resistance in plants.</title>
        <authorList>
            <person name="Xia Y."/>
            <person name="Gao Q.M."/>
            <person name="Yu K."/>
            <person name="Lapchyk L."/>
            <person name="Navarre D."/>
            <person name="Hildebrand D."/>
            <person name="Kachroo A."/>
            <person name="Kachroo P."/>
        </authorList>
    </citation>
    <scope>DISRUPTION PHENOTYPE</scope>
</reference>
<accession>O04652</accession>
<evidence type="ECO:0000250" key="1"/>
<evidence type="ECO:0000255" key="2"/>
<evidence type="ECO:0000255" key="3">
    <source>
        <dbReference type="PROSITE-ProRule" id="PRU00258"/>
    </source>
</evidence>
<evidence type="ECO:0000269" key="4">
    <source>
    </source>
</evidence>
<evidence type="ECO:0000305" key="5"/>
<gene>
    <name type="primary">ACP5</name>
    <name type="ordered locus">At5g27200</name>
    <name type="ORF">TM21B4.6</name>
</gene>
<comment type="function">
    <text evidence="1">Carrier of the growing fatty acid chain in fatty acid biosynthesis.</text>
</comment>
<comment type="subcellular location">
    <subcellularLocation>
        <location evidence="5">Plastid</location>
        <location evidence="5">Chloroplast</location>
    </subcellularLocation>
</comment>
<comment type="PTM">
    <text evidence="1">4'-phosphopantetheine is transferred from CoA to a specific serine of apo-ACP by acpS. This modification is essential for activity because fatty acids are bound in thioester linkage to the sulfhydryl of the prosthetic group (By similarity).</text>
</comment>
<comment type="disruption phenotype">
    <text evidence="4">No visible phenotype under normal growth conditions.</text>
</comment>
<comment type="similarity">
    <text evidence="5">Belongs to the acyl carrier protein (ACP) family.</text>
</comment>
<dbReference type="EMBL" id="AF007271">
    <property type="protein sequence ID" value="AAB61070.1"/>
    <property type="molecule type" value="Genomic_DNA"/>
</dbReference>
<dbReference type="EMBL" id="CP002688">
    <property type="protein sequence ID" value="AED93657.1"/>
    <property type="molecule type" value="Genomic_DNA"/>
</dbReference>
<dbReference type="PIR" id="T01801">
    <property type="entry name" value="T01801"/>
</dbReference>
<dbReference type="RefSeq" id="NP_198072.1">
    <property type="nucleotide sequence ID" value="NM_122602.2"/>
</dbReference>
<dbReference type="SMR" id="O04652"/>
<dbReference type="FunCoup" id="O04652">
    <property type="interactions" value="673"/>
</dbReference>
<dbReference type="STRING" id="3702.O04652"/>
<dbReference type="PaxDb" id="3702-AT5G27200.1"/>
<dbReference type="ProteomicsDB" id="243305"/>
<dbReference type="EnsemblPlants" id="AT5G27200.1">
    <property type="protein sequence ID" value="AT5G27200.1"/>
    <property type="gene ID" value="AT5G27200"/>
</dbReference>
<dbReference type="GeneID" id="832778"/>
<dbReference type="Gramene" id="AT5G27200.1">
    <property type="protein sequence ID" value="AT5G27200.1"/>
    <property type="gene ID" value="AT5G27200"/>
</dbReference>
<dbReference type="KEGG" id="ath:AT5G27200"/>
<dbReference type="Araport" id="AT5G27200"/>
<dbReference type="TAIR" id="AT5G27200">
    <property type="gene designation" value="ACP5"/>
</dbReference>
<dbReference type="eggNOG" id="KOG1748">
    <property type="taxonomic scope" value="Eukaryota"/>
</dbReference>
<dbReference type="HOGENOM" id="CLU_108696_1_0_1"/>
<dbReference type="InParanoid" id="O04652"/>
<dbReference type="OMA" id="DNAQTIT"/>
<dbReference type="PhylomeDB" id="O04652"/>
<dbReference type="PRO" id="PR:O04652"/>
<dbReference type="Proteomes" id="UP000006548">
    <property type="component" value="Chromosome 5"/>
</dbReference>
<dbReference type="ExpressionAtlas" id="O04652">
    <property type="expression patterns" value="baseline and differential"/>
</dbReference>
<dbReference type="GO" id="GO:0009507">
    <property type="term" value="C:chloroplast"/>
    <property type="evidence" value="ECO:0007669"/>
    <property type="project" value="UniProtKB-SubCell"/>
</dbReference>
<dbReference type="GO" id="GO:0000036">
    <property type="term" value="F:acyl carrier activity"/>
    <property type="evidence" value="ECO:0000250"/>
    <property type="project" value="TAIR"/>
</dbReference>
<dbReference type="GO" id="GO:0031177">
    <property type="term" value="F:phosphopantetheine binding"/>
    <property type="evidence" value="ECO:0007669"/>
    <property type="project" value="InterPro"/>
</dbReference>
<dbReference type="GO" id="GO:0009651">
    <property type="term" value="P:response to salt stress"/>
    <property type="evidence" value="ECO:0000315"/>
    <property type="project" value="TAIR"/>
</dbReference>
<dbReference type="FunFam" id="1.10.1200.10:FF:000017">
    <property type="entry name" value="Acyl carrier protein"/>
    <property type="match status" value="1"/>
</dbReference>
<dbReference type="Gene3D" id="1.10.1200.10">
    <property type="entry name" value="ACP-like"/>
    <property type="match status" value="1"/>
</dbReference>
<dbReference type="HAMAP" id="MF_01217">
    <property type="entry name" value="Acyl_carrier"/>
    <property type="match status" value="1"/>
</dbReference>
<dbReference type="InterPro" id="IPR003231">
    <property type="entry name" value="ACP"/>
</dbReference>
<dbReference type="InterPro" id="IPR036736">
    <property type="entry name" value="ACP-like_sf"/>
</dbReference>
<dbReference type="InterPro" id="IPR044813">
    <property type="entry name" value="ACP_chloroplastic"/>
</dbReference>
<dbReference type="InterPro" id="IPR020806">
    <property type="entry name" value="PKS_PP-bd"/>
</dbReference>
<dbReference type="InterPro" id="IPR009081">
    <property type="entry name" value="PP-bd_ACP"/>
</dbReference>
<dbReference type="InterPro" id="IPR006162">
    <property type="entry name" value="Ppantetheine_attach_site"/>
</dbReference>
<dbReference type="NCBIfam" id="TIGR00517">
    <property type="entry name" value="acyl_carrier"/>
    <property type="match status" value="1"/>
</dbReference>
<dbReference type="NCBIfam" id="NF002148">
    <property type="entry name" value="PRK00982.1-2"/>
    <property type="match status" value="1"/>
</dbReference>
<dbReference type="PANTHER" id="PTHR46153">
    <property type="entry name" value="ACYL CARRIER PROTEIN"/>
    <property type="match status" value="1"/>
</dbReference>
<dbReference type="PANTHER" id="PTHR46153:SF12">
    <property type="entry name" value="ACYL CARRIER PROTEIN 5, CHLOROPLASTIC"/>
    <property type="match status" value="1"/>
</dbReference>
<dbReference type="Pfam" id="PF00550">
    <property type="entry name" value="PP-binding"/>
    <property type="match status" value="1"/>
</dbReference>
<dbReference type="SMART" id="SM00823">
    <property type="entry name" value="PKS_PP"/>
    <property type="match status" value="1"/>
</dbReference>
<dbReference type="SUPFAM" id="SSF47336">
    <property type="entry name" value="ACP-like"/>
    <property type="match status" value="1"/>
</dbReference>
<dbReference type="PROSITE" id="PS50075">
    <property type="entry name" value="CARRIER"/>
    <property type="match status" value="1"/>
</dbReference>
<dbReference type="PROSITE" id="PS00012">
    <property type="entry name" value="PHOSPHOPANTETHEINE"/>
    <property type="match status" value="1"/>
</dbReference>